<accession>Q667N6</accession>
<gene>
    <name evidence="1" type="primary">nrdI</name>
    <name type="ordered locus">YPTB2956</name>
</gene>
<reference key="1">
    <citation type="journal article" date="2004" name="Proc. Natl. Acad. Sci. U.S.A.">
        <title>Insights into the evolution of Yersinia pestis through whole-genome comparison with Yersinia pseudotuberculosis.</title>
        <authorList>
            <person name="Chain P.S.G."/>
            <person name="Carniel E."/>
            <person name="Larimer F.W."/>
            <person name="Lamerdin J."/>
            <person name="Stoutland P.O."/>
            <person name="Regala W.M."/>
            <person name="Georgescu A.M."/>
            <person name="Vergez L.M."/>
            <person name="Land M.L."/>
            <person name="Motin V.L."/>
            <person name="Brubaker R.R."/>
            <person name="Fowler J."/>
            <person name="Hinnebusch J."/>
            <person name="Marceau M."/>
            <person name="Medigue C."/>
            <person name="Simonet M."/>
            <person name="Chenal-Francisque V."/>
            <person name="Souza B."/>
            <person name="Dacheux D."/>
            <person name="Elliott J.M."/>
            <person name="Derbise A."/>
            <person name="Hauser L.J."/>
            <person name="Garcia E."/>
        </authorList>
    </citation>
    <scope>NUCLEOTIDE SEQUENCE [LARGE SCALE GENOMIC DNA]</scope>
    <source>
        <strain>IP32953</strain>
    </source>
</reference>
<sequence length="134" mass="14916">MNPLVYFSSSSENSHRFVEKLQLPAIRIPIAGAREKLRVEQPYILLVPSYGGGSPVGAVPIQVIRFLNDVHNRSLIRGVIAAGNTNFGDAYCLAGDIISHKCQVPYLYRFELLGTAEDVANVRKGVTEFWQRQN</sequence>
<protein>
    <recommendedName>
        <fullName evidence="1">Protein NrdI</fullName>
    </recommendedName>
</protein>
<evidence type="ECO:0000255" key="1">
    <source>
        <dbReference type="HAMAP-Rule" id="MF_00128"/>
    </source>
</evidence>
<feature type="chain" id="PRO_0000164349" description="Protein NrdI">
    <location>
        <begin position="1"/>
        <end position="134"/>
    </location>
</feature>
<dbReference type="EMBL" id="BX936398">
    <property type="protein sequence ID" value="CAH22194.1"/>
    <property type="molecule type" value="Genomic_DNA"/>
</dbReference>
<dbReference type="RefSeq" id="WP_002215935.1">
    <property type="nucleotide sequence ID" value="NZ_CP009712.1"/>
</dbReference>
<dbReference type="SMR" id="Q667N6"/>
<dbReference type="GeneID" id="57976042"/>
<dbReference type="KEGG" id="ypo:BZ17_3671"/>
<dbReference type="KEGG" id="yps:YPTB2956"/>
<dbReference type="PATRIC" id="fig|273123.14.peg.3846"/>
<dbReference type="Proteomes" id="UP000001011">
    <property type="component" value="Chromosome"/>
</dbReference>
<dbReference type="GO" id="GO:0010181">
    <property type="term" value="F:FMN binding"/>
    <property type="evidence" value="ECO:0007669"/>
    <property type="project" value="InterPro"/>
</dbReference>
<dbReference type="GO" id="GO:0036211">
    <property type="term" value="P:protein modification process"/>
    <property type="evidence" value="ECO:0007669"/>
    <property type="project" value="InterPro"/>
</dbReference>
<dbReference type="FunFam" id="3.40.50.360:FF:000005">
    <property type="entry name" value="Protein NrdI"/>
    <property type="match status" value="1"/>
</dbReference>
<dbReference type="Gene3D" id="3.40.50.360">
    <property type="match status" value="1"/>
</dbReference>
<dbReference type="HAMAP" id="MF_00128">
    <property type="entry name" value="NrdI"/>
    <property type="match status" value="1"/>
</dbReference>
<dbReference type="InterPro" id="IPR029039">
    <property type="entry name" value="Flavoprotein-like_sf"/>
</dbReference>
<dbReference type="InterPro" id="IPR020852">
    <property type="entry name" value="RNR_Ib_NrdI_bac"/>
</dbReference>
<dbReference type="InterPro" id="IPR004465">
    <property type="entry name" value="RNR_NrdI"/>
</dbReference>
<dbReference type="NCBIfam" id="TIGR00333">
    <property type="entry name" value="nrdI"/>
    <property type="match status" value="1"/>
</dbReference>
<dbReference type="PANTHER" id="PTHR37297">
    <property type="entry name" value="PROTEIN NRDI"/>
    <property type="match status" value="1"/>
</dbReference>
<dbReference type="PANTHER" id="PTHR37297:SF1">
    <property type="entry name" value="PROTEIN NRDI"/>
    <property type="match status" value="1"/>
</dbReference>
<dbReference type="Pfam" id="PF07972">
    <property type="entry name" value="Flavodoxin_NdrI"/>
    <property type="match status" value="1"/>
</dbReference>
<dbReference type="PIRSF" id="PIRSF005087">
    <property type="entry name" value="NrdI"/>
    <property type="match status" value="1"/>
</dbReference>
<dbReference type="SUPFAM" id="SSF52218">
    <property type="entry name" value="Flavoproteins"/>
    <property type="match status" value="1"/>
</dbReference>
<organism>
    <name type="scientific">Yersinia pseudotuberculosis serotype I (strain IP32953)</name>
    <dbReference type="NCBI Taxonomy" id="273123"/>
    <lineage>
        <taxon>Bacteria</taxon>
        <taxon>Pseudomonadati</taxon>
        <taxon>Pseudomonadota</taxon>
        <taxon>Gammaproteobacteria</taxon>
        <taxon>Enterobacterales</taxon>
        <taxon>Yersiniaceae</taxon>
        <taxon>Yersinia</taxon>
    </lineage>
</organism>
<proteinExistence type="inferred from homology"/>
<name>NRDI_YERPS</name>
<comment type="function">
    <text evidence="1">Probably involved in ribonucleotide reductase function.</text>
</comment>
<comment type="similarity">
    <text evidence="1">Belongs to the NrdI family.</text>
</comment>